<feature type="chain" id="PRO_0000171846" description="Putative membrane protein insertion efficiency factor">
    <location>
        <begin position="1"/>
        <end position="90"/>
    </location>
</feature>
<evidence type="ECO:0000255" key="1">
    <source>
        <dbReference type="HAMAP-Rule" id="MF_00386"/>
    </source>
</evidence>
<comment type="function">
    <text evidence="1">Could be involved in insertion of integral membrane proteins into the membrane.</text>
</comment>
<comment type="subcellular location">
    <subcellularLocation>
        <location evidence="1">Cell membrane</location>
        <topology evidence="1">Peripheral membrane protein</topology>
        <orientation evidence="1">Cytoplasmic side</orientation>
    </subcellularLocation>
</comment>
<comment type="similarity">
    <text evidence="1">Belongs to the UPF0161 family.</text>
</comment>
<dbReference type="EMBL" id="BA000028">
    <property type="protein sequence ID" value="BAC13643.1"/>
    <property type="molecule type" value="Genomic_DNA"/>
</dbReference>
<dbReference type="RefSeq" id="WP_011066088.1">
    <property type="nucleotide sequence ID" value="NC_004193.1"/>
</dbReference>
<dbReference type="STRING" id="221109.gene:10733927"/>
<dbReference type="KEGG" id="oih:OB1687"/>
<dbReference type="eggNOG" id="COG0759">
    <property type="taxonomic scope" value="Bacteria"/>
</dbReference>
<dbReference type="HOGENOM" id="CLU_144811_5_2_9"/>
<dbReference type="OrthoDB" id="9801753at2"/>
<dbReference type="PhylomeDB" id="Q8EQL0"/>
<dbReference type="Proteomes" id="UP000000822">
    <property type="component" value="Chromosome"/>
</dbReference>
<dbReference type="GO" id="GO:0005886">
    <property type="term" value="C:plasma membrane"/>
    <property type="evidence" value="ECO:0007669"/>
    <property type="project" value="UniProtKB-SubCell"/>
</dbReference>
<dbReference type="HAMAP" id="MF_00386">
    <property type="entry name" value="UPF0161_YidD"/>
    <property type="match status" value="1"/>
</dbReference>
<dbReference type="InterPro" id="IPR002696">
    <property type="entry name" value="Membr_insert_effic_factor_YidD"/>
</dbReference>
<dbReference type="NCBIfam" id="TIGR00278">
    <property type="entry name" value="membrane protein insertion efficiency factor YidD"/>
    <property type="match status" value="1"/>
</dbReference>
<dbReference type="PANTHER" id="PTHR33383">
    <property type="entry name" value="MEMBRANE PROTEIN INSERTION EFFICIENCY FACTOR-RELATED"/>
    <property type="match status" value="1"/>
</dbReference>
<dbReference type="PANTHER" id="PTHR33383:SF1">
    <property type="entry name" value="MEMBRANE PROTEIN INSERTION EFFICIENCY FACTOR-RELATED"/>
    <property type="match status" value="1"/>
</dbReference>
<dbReference type="Pfam" id="PF01809">
    <property type="entry name" value="YidD"/>
    <property type="match status" value="1"/>
</dbReference>
<dbReference type="SMART" id="SM01234">
    <property type="entry name" value="Haemolytic"/>
    <property type="match status" value="1"/>
</dbReference>
<accession>Q8EQL0</accession>
<organism>
    <name type="scientific">Oceanobacillus iheyensis (strain DSM 14371 / CIP 107618 / JCM 11309 / KCTC 3954 / HTE831)</name>
    <dbReference type="NCBI Taxonomy" id="221109"/>
    <lineage>
        <taxon>Bacteria</taxon>
        <taxon>Bacillati</taxon>
        <taxon>Bacillota</taxon>
        <taxon>Bacilli</taxon>
        <taxon>Bacillales</taxon>
        <taxon>Bacillaceae</taxon>
        <taxon>Oceanobacillus</taxon>
    </lineage>
</organism>
<protein>
    <recommendedName>
        <fullName evidence="1">Putative membrane protein insertion efficiency factor</fullName>
    </recommendedName>
</protein>
<proteinExistence type="inferred from homology"/>
<keyword id="KW-1003">Cell membrane</keyword>
<keyword id="KW-0472">Membrane</keyword>
<keyword id="KW-1185">Reference proteome</keyword>
<sequence length="90" mass="10205">MKFIFIGLIKFYRSAISPFTPSSCRFYPTCSEYGLEAIKRFGAFKGGILTIKRISKCHPFHPGGVDVVPDKVKNINNEKHLEKGVIRNED</sequence>
<name>YIDD_OCEIH</name>
<reference key="1">
    <citation type="journal article" date="2002" name="Nucleic Acids Res.">
        <title>Genome sequence of Oceanobacillus iheyensis isolated from the Iheya Ridge and its unexpected adaptive capabilities to extreme environments.</title>
        <authorList>
            <person name="Takami H."/>
            <person name="Takaki Y."/>
            <person name="Uchiyama I."/>
        </authorList>
    </citation>
    <scope>NUCLEOTIDE SEQUENCE [LARGE SCALE GENOMIC DNA]</scope>
    <source>
        <strain>DSM 14371 / CIP 107618 / JCM 11309 / KCTC 3954 / HTE831</strain>
    </source>
</reference>
<gene>
    <name type="ordered locus">OB1687</name>
</gene>